<comment type="subcellular location">
    <subcellularLocation>
        <location evidence="5">Membrane</location>
        <topology evidence="5">Multi-pass membrane protein</topology>
    </subcellularLocation>
</comment>
<comment type="similarity">
    <text evidence="5">Belongs to the SYG1 (TC 2.A.94) family.</text>
</comment>
<name>SPXS2_DICDI</name>
<reference key="1">
    <citation type="journal article" date="2002" name="Nature">
        <title>Sequence and analysis of chromosome 2 of Dictyostelium discoideum.</title>
        <authorList>
            <person name="Gloeckner G."/>
            <person name="Eichinger L."/>
            <person name="Szafranski K."/>
            <person name="Pachebat J.A."/>
            <person name="Bankier A.T."/>
            <person name="Dear P.H."/>
            <person name="Lehmann R."/>
            <person name="Baumgart C."/>
            <person name="Parra G."/>
            <person name="Abril J.F."/>
            <person name="Guigo R."/>
            <person name="Kumpf K."/>
            <person name="Tunggal B."/>
            <person name="Cox E.C."/>
            <person name="Quail M.A."/>
            <person name="Platzer M."/>
            <person name="Rosenthal A."/>
            <person name="Noegel A.A."/>
        </authorList>
    </citation>
    <scope>NUCLEOTIDE SEQUENCE [LARGE SCALE GENOMIC DNA]</scope>
    <source>
        <strain>AX4</strain>
    </source>
</reference>
<reference key="2">
    <citation type="journal article" date="2005" name="Nature">
        <title>The genome of the social amoeba Dictyostelium discoideum.</title>
        <authorList>
            <person name="Eichinger L."/>
            <person name="Pachebat J.A."/>
            <person name="Gloeckner G."/>
            <person name="Rajandream M.A."/>
            <person name="Sucgang R."/>
            <person name="Berriman M."/>
            <person name="Song J."/>
            <person name="Olsen R."/>
            <person name="Szafranski K."/>
            <person name="Xu Q."/>
            <person name="Tunggal B."/>
            <person name="Kummerfeld S."/>
            <person name="Madera M."/>
            <person name="Konfortov B.A."/>
            <person name="Rivero F."/>
            <person name="Bankier A.T."/>
            <person name="Lehmann R."/>
            <person name="Hamlin N."/>
            <person name="Davies R."/>
            <person name="Gaudet P."/>
            <person name="Fey P."/>
            <person name="Pilcher K."/>
            <person name="Chen G."/>
            <person name="Saunders D."/>
            <person name="Sodergren E.J."/>
            <person name="Davis P."/>
            <person name="Kerhornou A."/>
            <person name="Nie X."/>
            <person name="Hall N."/>
            <person name="Anjard C."/>
            <person name="Hemphill L."/>
            <person name="Bason N."/>
            <person name="Farbrother P."/>
            <person name="Desany B."/>
            <person name="Just E."/>
            <person name="Morio T."/>
            <person name="Rost R."/>
            <person name="Churcher C.M."/>
            <person name="Cooper J."/>
            <person name="Haydock S."/>
            <person name="van Driessche N."/>
            <person name="Cronin A."/>
            <person name="Goodhead I."/>
            <person name="Muzny D.M."/>
            <person name="Mourier T."/>
            <person name="Pain A."/>
            <person name="Lu M."/>
            <person name="Harper D."/>
            <person name="Lindsay R."/>
            <person name="Hauser H."/>
            <person name="James K.D."/>
            <person name="Quiles M."/>
            <person name="Madan Babu M."/>
            <person name="Saito T."/>
            <person name="Buchrieser C."/>
            <person name="Wardroper A."/>
            <person name="Felder M."/>
            <person name="Thangavelu M."/>
            <person name="Johnson D."/>
            <person name="Knights A."/>
            <person name="Loulseged H."/>
            <person name="Mungall K.L."/>
            <person name="Oliver K."/>
            <person name="Price C."/>
            <person name="Quail M.A."/>
            <person name="Urushihara H."/>
            <person name="Hernandez J."/>
            <person name="Rabbinowitsch E."/>
            <person name="Steffen D."/>
            <person name="Sanders M."/>
            <person name="Ma J."/>
            <person name="Kohara Y."/>
            <person name="Sharp S."/>
            <person name="Simmonds M.N."/>
            <person name="Spiegler S."/>
            <person name="Tivey A."/>
            <person name="Sugano S."/>
            <person name="White B."/>
            <person name="Walker D."/>
            <person name="Woodward J.R."/>
            <person name="Winckler T."/>
            <person name="Tanaka Y."/>
            <person name="Shaulsky G."/>
            <person name="Schleicher M."/>
            <person name="Weinstock G.M."/>
            <person name="Rosenthal A."/>
            <person name="Cox E.C."/>
            <person name="Chisholm R.L."/>
            <person name="Gibbs R.A."/>
            <person name="Loomis W.F."/>
            <person name="Platzer M."/>
            <person name="Kay R.R."/>
            <person name="Williams J.G."/>
            <person name="Dear P.H."/>
            <person name="Noegel A.A."/>
            <person name="Barrell B.G."/>
            <person name="Kuspa A."/>
        </authorList>
    </citation>
    <scope>NUCLEOTIDE SEQUENCE [LARGE SCALE GENOMIC DNA]</scope>
    <source>
        <strain>AX4</strain>
    </source>
</reference>
<dbReference type="EMBL" id="AAFI02000012">
    <property type="protein sequence ID" value="EAL70133.1"/>
    <property type="molecule type" value="Genomic_DNA"/>
</dbReference>
<dbReference type="RefSeq" id="XP_644139.1">
    <property type="nucleotide sequence ID" value="XM_639047.1"/>
</dbReference>
<dbReference type="SMR" id="Q86HQ3"/>
<dbReference type="FunCoup" id="Q86HQ3">
    <property type="interactions" value="2"/>
</dbReference>
<dbReference type="STRING" id="44689.Q86HQ3"/>
<dbReference type="PaxDb" id="44689-DDB0266497"/>
<dbReference type="EnsemblProtists" id="EAL70133">
    <property type="protein sequence ID" value="EAL70133"/>
    <property type="gene ID" value="DDB_G0274481"/>
</dbReference>
<dbReference type="GeneID" id="8619569"/>
<dbReference type="KEGG" id="ddi:DDB_G0274481"/>
<dbReference type="dictyBase" id="DDB_G0274481"/>
<dbReference type="VEuPathDB" id="AmoebaDB:DDB_G0274481"/>
<dbReference type="eggNOG" id="KOG1162">
    <property type="taxonomic scope" value="Eukaryota"/>
</dbReference>
<dbReference type="HOGENOM" id="CLU_290612_0_0_1"/>
<dbReference type="InParanoid" id="Q86HQ3"/>
<dbReference type="PhylomeDB" id="Q86HQ3"/>
<dbReference type="PRO" id="PR:Q86HQ3"/>
<dbReference type="Proteomes" id="UP000002195">
    <property type="component" value="Chromosome 2"/>
</dbReference>
<dbReference type="GO" id="GO:0005886">
    <property type="term" value="C:plasma membrane"/>
    <property type="evidence" value="ECO:0000318"/>
    <property type="project" value="GO_Central"/>
</dbReference>
<dbReference type="GO" id="GO:0000822">
    <property type="term" value="F:inositol hexakisphosphate binding"/>
    <property type="evidence" value="ECO:0000318"/>
    <property type="project" value="GO_Central"/>
</dbReference>
<dbReference type="GO" id="GO:0005315">
    <property type="term" value="F:phosphate transmembrane transporter activity"/>
    <property type="evidence" value="ECO:0000318"/>
    <property type="project" value="GO_Central"/>
</dbReference>
<dbReference type="GO" id="GO:0016036">
    <property type="term" value="P:cellular response to phosphate starvation"/>
    <property type="evidence" value="ECO:0000318"/>
    <property type="project" value="GO_Central"/>
</dbReference>
<dbReference type="GO" id="GO:0006817">
    <property type="term" value="P:phosphate ion transport"/>
    <property type="evidence" value="ECO:0000318"/>
    <property type="project" value="GO_Central"/>
</dbReference>
<dbReference type="CDD" id="cd14447">
    <property type="entry name" value="SPX"/>
    <property type="match status" value="1"/>
</dbReference>
<dbReference type="InterPro" id="IPR004342">
    <property type="entry name" value="EXS_C"/>
</dbReference>
<dbReference type="InterPro" id="IPR004331">
    <property type="entry name" value="SPX_dom"/>
</dbReference>
<dbReference type="PANTHER" id="PTHR10783:SF78">
    <property type="entry name" value="SPX AND EXS DOMAIN-CONTAINING PROTEIN 2-RELATED"/>
    <property type="match status" value="1"/>
</dbReference>
<dbReference type="PANTHER" id="PTHR10783">
    <property type="entry name" value="XENOTROPIC AND POLYTROPIC RETROVIRUS RECEPTOR 1-RELATED"/>
    <property type="match status" value="1"/>
</dbReference>
<dbReference type="Pfam" id="PF03124">
    <property type="entry name" value="EXS"/>
    <property type="match status" value="1"/>
</dbReference>
<dbReference type="Pfam" id="PF03105">
    <property type="entry name" value="SPX"/>
    <property type="match status" value="1"/>
</dbReference>
<dbReference type="PROSITE" id="PS51380">
    <property type="entry name" value="EXS"/>
    <property type="match status" value="1"/>
</dbReference>
<dbReference type="PROSITE" id="PS51382">
    <property type="entry name" value="SPX"/>
    <property type="match status" value="1"/>
</dbReference>
<keyword id="KW-0472">Membrane</keyword>
<keyword id="KW-1185">Reference proteome</keyword>
<keyword id="KW-0812">Transmembrane</keyword>
<keyword id="KW-1133">Transmembrane helix</keyword>
<proteinExistence type="inferred from homology"/>
<sequence length="1053" mass="122393">MKFRDYLKDNKVSHWRDKYIDYEYLKNLIDNEYINAEILNSAIIDLPLSPEEQNNINKNNNNNNNNNNNNNNNNNNNNNINNNNNNNNTLKDGEQTNSNNISIPNQMAPQESSGEDEDDENENGNGVVGDEDGGDDDEIEMDELVIDDNGEIINITATAGSRVKVKKGINKGVKRLKKIAKNTNNRLSRMVSRSPKNKGLGSSSEIEGDEFQLDGGGISSQIEMVASNNITGATVFVPQETFQDGFIDQVNKVDIFFVDRYRKTKFKCVDLVGMIPFLSDNEQLRTIRNIDYVKQGFHDNYHYLESLESYKNLNLDGFYKILDKYEKINPRIAKECRKYLENTRLTSTNSPVRELSRRIKQIYARYFTGNDIKLANNQIRTNKQVNQFQNYIIGFLIGASAILIAQVIFKFYYYFPDVADSPKNSPMAWLLFRISSLPIILGTLFALMTKLWEKAGINYVFIFELKPDIKRSSSRYLMYGMIFVTMWLVVFNVYVDSISNKTGSPETSRYLLLIPLLFILGSIFFLILPFKVLAHRTRFWVLHKMSKVVQAPFVPVRFPDFFMSVQLLCLGEFLFNMQQIVCMFKFNDPLYSPSGVCFKHKAVIFPILSVLPFYWRVMQCVRRFWETGQFFPHITSAIRSTFSIVTNILLWVANNYGNKEWSWIKILWFIINVVGTVYKLYADFTVDWGLFLNYKTNKQWPLREKMVFKRKWVYYVAMSFDTFFRFVWLIVFSIRQGTSYKLDHPLFLFWFSLSEIAWAAQFIFFRVESEHVQCADTYSHFKDIPLPFSQDYKNYMEEKKSRYDEKKPHHHHHHDNNNNETKDGSGGTHHRRNLSNGHHPYDDDDDDESIDSDADSKDLNLESNSEFVDDEGYNQRKNSIISSIKKIASTQELNSMNRISSHPDLYSTMQRFAGHVPDSNSSMPRMYSHPDFNHPIPRVLTSHVEVNPSTLRTVPQHRLNNIPNQRIISHADINPQHLRVGSPRVEFNSTVQQRSPHGEIQSSMIRNHSRADLNSSMQRIQSHPELNSSNRNQVDPNSPMNRLITRADLNKSR</sequence>
<feature type="chain" id="PRO_0000330821" description="SPX and EXS domain-containing protein 2">
    <location>
        <begin position="1"/>
        <end position="1053"/>
    </location>
</feature>
<feature type="transmembrane region" description="Helical" evidence="1">
    <location>
        <begin position="391"/>
        <end position="411"/>
    </location>
</feature>
<feature type="transmembrane region" description="Helical" evidence="1">
    <location>
        <begin position="427"/>
        <end position="447"/>
    </location>
</feature>
<feature type="transmembrane region" description="Helical" evidence="1">
    <location>
        <begin position="476"/>
        <end position="496"/>
    </location>
</feature>
<feature type="transmembrane region" description="Helical" evidence="1">
    <location>
        <begin position="510"/>
        <end position="530"/>
    </location>
</feature>
<feature type="transmembrane region" description="Helical" evidence="1">
    <location>
        <begin position="561"/>
        <end position="581"/>
    </location>
</feature>
<feature type="transmembrane region" description="Helical" evidence="1">
    <location>
        <begin position="595"/>
        <end position="615"/>
    </location>
</feature>
<feature type="transmembrane region" description="Helical" evidence="1">
    <location>
        <begin position="630"/>
        <end position="652"/>
    </location>
</feature>
<feature type="transmembrane region" description="Helical" evidence="1">
    <location>
        <begin position="666"/>
        <end position="686"/>
    </location>
</feature>
<feature type="transmembrane region" description="Helical" evidence="1">
    <location>
        <begin position="712"/>
        <end position="732"/>
    </location>
</feature>
<feature type="transmembrane region" description="Helical" evidence="1">
    <location>
        <begin position="745"/>
        <end position="765"/>
    </location>
</feature>
<feature type="domain" description="SPX" evidence="3">
    <location>
        <begin position="1"/>
        <end position="339"/>
    </location>
</feature>
<feature type="domain" description="EXS" evidence="2">
    <location>
        <begin position="596"/>
        <end position="798"/>
    </location>
</feature>
<feature type="region of interest" description="Disordered" evidence="4">
    <location>
        <begin position="54"/>
        <end position="137"/>
    </location>
</feature>
<feature type="region of interest" description="Disordered" evidence="4">
    <location>
        <begin position="799"/>
        <end position="871"/>
    </location>
</feature>
<feature type="region of interest" description="Disordered" evidence="4">
    <location>
        <begin position="1023"/>
        <end position="1053"/>
    </location>
</feature>
<feature type="compositionally biased region" description="Low complexity" evidence="4">
    <location>
        <begin position="54"/>
        <end position="88"/>
    </location>
</feature>
<feature type="compositionally biased region" description="Polar residues" evidence="4">
    <location>
        <begin position="95"/>
        <end position="112"/>
    </location>
</feature>
<feature type="compositionally biased region" description="Acidic residues" evidence="4">
    <location>
        <begin position="113"/>
        <end position="122"/>
    </location>
</feature>
<feature type="compositionally biased region" description="Acidic residues" evidence="4">
    <location>
        <begin position="842"/>
        <end position="853"/>
    </location>
</feature>
<feature type="compositionally biased region" description="Polar residues" evidence="4">
    <location>
        <begin position="1023"/>
        <end position="1040"/>
    </location>
</feature>
<accession>Q86HQ3</accession>
<accession>Q555D4</accession>
<gene>
    <name type="ORF">DDB_G0274481</name>
</gene>
<organism>
    <name type="scientific">Dictyostelium discoideum</name>
    <name type="common">Social amoeba</name>
    <dbReference type="NCBI Taxonomy" id="44689"/>
    <lineage>
        <taxon>Eukaryota</taxon>
        <taxon>Amoebozoa</taxon>
        <taxon>Evosea</taxon>
        <taxon>Eumycetozoa</taxon>
        <taxon>Dictyostelia</taxon>
        <taxon>Dictyosteliales</taxon>
        <taxon>Dictyosteliaceae</taxon>
        <taxon>Dictyostelium</taxon>
    </lineage>
</organism>
<protein>
    <recommendedName>
        <fullName>SPX and EXS domain-containing protein 2</fullName>
    </recommendedName>
</protein>
<evidence type="ECO:0000255" key="1"/>
<evidence type="ECO:0000255" key="2">
    <source>
        <dbReference type="PROSITE-ProRule" id="PRU00712"/>
    </source>
</evidence>
<evidence type="ECO:0000255" key="3">
    <source>
        <dbReference type="PROSITE-ProRule" id="PRU00714"/>
    </source>
</evidence>
<evidence type="ECO:0000256" key="4">
    <source>
        <dbReference type="SAM" id="MobiDB-lite"/>
    </source>
</evidence>
<evidence type="ECO:0000305" key="5"/>